<sequence length="1017" mass="110038">MDQDTKTIIQYPTSGDEYDIPFDYLSRKFVRVSLVSDTQRILLDNITDYRYVSRTRVKLLVSTDGYSRVEIRRFTSASEMVVDFSDGSVLRATDLNVSALQSAHIAEEARDLFSTSLSIGQLSYFDAKGLQIKNVAAGVDNTDAVTVQQLNKIIADVVTTIPDSVADNIRGLWARVLGDIGITLVDGSFETGATITTRTQALWSISGRKCYTWAGALPKVVPENSTPESTGGISETAWVDSSSKALGVLLAGPSGAERVGLKQGGTVQDAINWLTFDSFDIVKDGSKDVTADIMAACVVANDLGLDIKQNDGTYLVSGNPVWPVYNSLDLNGVTLKLAAGFTGYFALTQKDSTTVYGPTSPIVQAINAAGGRTAGSGVLEGLVNSTELDGKFLFMEGADVLYYSRGTAKYWWTNTYLSNRGKLSDNLKYGVSAITKITAVTPRTKIVYYRLPNLDFGNGPANNGVIRVLNNTRFIMQGGSISNRPLKDVSKSPVIISLNYCAAFKAYDFFDPYPAFAVDSNNSLIYSYTLNFNDIADAVFENFNSQGYGWGVVGGQRSTNITYRDCNLNRVDMHDPYMGYLKVLDTRLGTWGINASGMGDMYLERVTVDLDDSAHGGYREHEGIINARGDFGGFHDGGLYIKDLTIVGEASAFEAASGHPVALVSAYSFNASLASIPESSPVTPWGFKEVIVEGLHCPFKRTGRRFNSIISAPSIQFTVYHPMRVKLEDCNFNSTAFEKFDLRGWRVTPYNPSKVGIANTLAFRPTNFVDVKDCSMVGLEFTRPTRAYDYSNFDVNLVNVKNVEEHSLSPFTLYTNQCGRYNLVGCGLQQIVDKSMTSGERANRRSTFSVTGGTWNSLSGNPTDITYGNGYDIPVVATGVMFVGPYSQTEVTGANLNVAEFVQASGCKFLSSGPTYIQPLLWSGAGGPTGASANFNVARGNTLGLNISAVNGETSQVIAATLVIPQGFSTGPAAGTTYGFTVEKNINYQLGLNARSLKANVGLVRCSDTITGVYLNA</sequence>
<organism>
    <name type="scientific">Klebsiella phage P510</name>
    <name type="common">Bacteriophage P510</name>
    <dbReference type="NCBI Taxonomy" id="2777229"/>
    <lineage>
        <taxon>Viruses</taxon>
        <taxon>Duplodnaviria</taxon>
        <taxon>Heunggongvirae</taxon>
        <taxon>Uroviricota</taxon>
        <taxon>Caudoviricetes</taxon>
        <taxon>Autographiviridae</taxon>
        <taxon>Studiervirinae</taxon>
        <taxon>Przondovirus</taxon>
    </lineage>
</organism>
<protein>
    <recommendedName>
        <fullName evidence="4">Depolymerase, capsule KL64-specific</fullName>
    </recommendedName>
    <alternativeName>
        <fullName evidence="5">Gene product 38</fullName>
        <shortName evidence="5">gp38</shortName>
    </alternativeName>
    <alternativeName>
        <fullName evidence="4">P510dep</fullName>
    </alternativeName>
    <alternativeName>
        <fullName evidence="5">Probable tail spike protein</fullName>
    </alternativeName>
</protein>
<gene>
    <name type="ORF">ORF38</name>
</gene>
<feature type="chain" id="PRO_0000458719" description="Depolymerase, capsule KL64-specific">
    <location>
        <begin position="1"/>
        <end position="1017"/>
    </location>
</feature>
<evidence type="ECO:0000250" key="1">
    <source>
        <dbReference type="UniProtKB" id="D1L2X0"/>
    </source>
</evidence>
<evidence type="ECO:0000250" key="2">
    <source>
        <dbReference type="UniProtKB" id="P03748"/>
    </source>
</evidence>
<evidence type="ECO:0000269" key="3">
    <source>
    </source>
</evidence>
<evidence type="ECO:0000303" key="4">
    <source>
    </source>
</evidence>
<evidence type="ECO:0000305" key="5"/>
<evidence type="ECO:0000305" key="6">
    <source>
    </source>
</evidence>
<keyword id="KW-1238">Degradation of host capsule during virus entry</keyword>
<keyword id="KW-1235">Degradation of host cell envelope components during virus entry</keyword>
<keyword id="KW-0945">Host-virus interaction</keyword>
<keyword id="KW-1185">Reference proteome</keyword>
<keyword id="KW-1233">Viral attachment to host adhesion receptor</keyword>
<keyword id="KW-1161">Viral attachment to host cell</keyword>
<keyword id="KW-1227">Viral tail protein</keyword>
<keyword id="KW-0946">Virion</keyword>
<keyword id="KW-1160">Virus entry into host cell</keyword>
<dbReference type="EMBL" id="MT966872">
    <property type="protein sequence ID" value="QOV05454.1"/>
    <property type="molecule type" value="Genomic_DNA"/>
</dbReference>
<dbReference type="SMR" id="A0A7S6R613"/>
<dbReference type="Proteomes" id="UP000595783">
    <property type="component" value="Genome"/>
</dbReference>
<dbReference type="GO" id="GO:0019867">
    <property type="term" value="C:outer membrane"/>
    <property type="evidence" value="ECO:0007669"/>
    <property type="project" value="InterPro"/>
</dbReference>
<dbReference type="GO" id="GO:0098015">
    <property type="term" value="C:virus tail"/>
    <property type="evidence" value="ECO:0007669"/>
    <property type="project" value="UniProtKB-KW"/>
</dbReference>
<dbReference type="GO" id="GO:0098671">
    <property type="term" value="P:adhesion receptor-mediated virion attachment to host cell"/>
    <property type="evidence" value="ECO:0007669"/>
    <property type="project" value="UniProtKB-KW"/>
</dbReference>
<dbReference type="GO" id="GO:0098994">
    <property type="term" value="P:symbiont entry into host cell via disruption of host cell envelope"/>
    <property type="evidence" value="ECO:0007669"/>
    <property type="project" value="UniProtKB-KW"/>
</dbReference>
<dbReference type="GO" id="GO:0098996">
    <property type="term" value="P:symbiont entry into host cell via disruption of host cell glycocalyx"/>
    <property type="evidence" value="ECO:0007669"/>
    <property type="project" value="UniProtKB-KW"/>
</dbReference>
<dbReference type="Gene3D" id="2.10.10.80">
    <property type="match status" value="1"/>
</dbReference>
<dbReference type="Gene3D" id="2.150.10.10">
    <property type="entry name" value="Serralysin-like metalloprotease, C-terminal"/>
    <property type="match status" value="1"/>
</dbReference>
<dbReference type="InterPro" id="IPR008635">
    <property type="entry name" value="Coiled_stalk_dom"/>
</dbReference>
<dbReference type="InterPro" id="IPR005604">
    <property type="entry name" value="Phage_T7_tail_fibre-like_N"/>
</dbReference>
<dbReference type="InterPro" id="IPR011049">
    <property type="entry name" value="Serralysin-like_metalloprot_C"/>
</dbReference>
<dbReference type="InterPro" id="IPR040775">
    <property type="entry name" value="Tail_spike_N"/>
</dbReference>
<dbReference type="Pfam" id="PF03906">
    <property type="entry name" value="Phage_T7_tail"/>
    <property type="match status" value="1"/>
</dbReference>
<dbReference type="Pfam" id="PF18668">
    <property type="entry name" value="Tail_spike_N"/>
    <property type="match status" value="1"/>
</dbReference>
<dbReference type="Pfam" id="PF05662">
    <property type="entry name" value="YadA_stalk"/>
    <property type="match status" value="1"/>
</dbReference>
<dbReference type="SUPFAM" id="SSF101967">
    <property type="entry name" value="Adhesin YadA, collagen-binding domain"/>
    <property type="match status" value="1"/>
</dbReference>
<accession>A0A7S6R613</accession>
<comment type="function">
    <text evidence="3 6">Functions as a receptor binding protein (RBP) and probably mediates the attachment to the host capsular exopolysaccharides (Probable). Displays a depolymerase activity that specifically degrades the KL64-type polysaccharides of Klebsiella pneumoniae capsule, which allows the phage to reach the host cell membrane and bind the entry receptor (PubMed:34156584).</text>
</comment>
<comment type="subunit">
    <text evidence="2">Homotrimer.</text>
</comment>
<comment type="subcellular location">
    <subcellularLocation>
        <location evidence="5">Virion</location>
    </subcellularLocation>
    <text evidence="5">Tail appendage.</text>
</comment>
<comment type="domain">
    <text evidence="1 5">The N-terminus anchors the RBP to the virion (By similarity). The central part and C-terminus probably binds and degrades the host exopolysaccharides (Probable).</text>
</comment>
<reference key="1">
    <citation type="journal article" date="2021" name="Virus Genes">
        <title>Identification of a phage-derived depolymerase specific for KL64 capsule of Klebsiella pneumoniae and its anti-biofilm effect.</title>
        <authorList>
            <person name="Li M."/>
            <person name="Li P."/>
            <person name="Chen L."/>
            <person name="Guo G."/>
            <person name="Xiao Y."/>
            <person name="Chen L."/>
            <person name="Du H."/>
            <person name="Zhang W."/>
        </authorList>
    </citation>
    <scope>NUCLEOTIDE SEQUENCE [LARGE SCALE GENOMIC DNA]</scope>
    <scope>FUNCTION</scope>
</reference>
<reference key="2">
    <citation type="journal article" date="2019" name="Front. Microbiol.">
        <title>Modeling the Architecture of Depolymerase-Containing Receptor Binding Proteins in Klebsiella Phages.</title>
        <authorList>
            <person name="Latka A."/>
            <person name="Leiman P.G."/>
            <person name="Drulis-Kawa Z."/>
            <person name="Briers Y."/>
        </authorList>
    </citation>
    <scope>REVIEW</scope>
</reference>
<proteinExistence type="inferred from homology"/>
<name>DEPOL_BPK51</name>